<accession>Q5T7V8</accession>
<accession>Q49A22</accession>
<accession>Q6P1P9</accession>
<accession>Q9HAE6</accession>
<accession>Q9Y350</accession>
<sequence>MAQGWAGFSEEELRRLKQTKDPFEPQRRLPAKKSRQQLQREKALVEQSQKLGLQDGSTSLLPEQLLSAPKQRVNVQKPPFSSPTLPSHFTLTSPVGDGQPQGIESQPKELGLENSHDGHNNVEILPPKPDCKLEKKKVELQEKSRWEVLQQEQRLMEEKNKRKKALLAKAIAERSKRTQAETMKLKRIQKELQALDDMVSADIGILRNRIDQASLDYSYARKRFDRAEAEYIAAKLDIQRKTEIKEQLTEHLCTIIQQNELRKAKKLEELMQQLDVEADEETLELEVEVERLLHEQEVESRRPVVRLERPFQPAEESVTLEFAKENRKCQEQAVSPKVDDQCGNSSSIPFLSPNCPNQEGNDISAALAT</sequence>
<name>GORAB_HUMAN</name>
<keyword id="KW-0025">Alternative splicing</keyword>
<keyword id="KW-0175">Coiled coil</keyword>
<keyword id="KW-0963">Cytoplasm</keyword>
<keyword id="KW-0242">Dwarfism</keyword>
<keyword id="KW-0333">Golgi apparatus</keyword>
<keyword id="KW-1285">Osteoporosis</keyword>
<keyword id="KW-1267">Proteomics identification</keyword>
<keyword id="KW-1185">Reference proteome</keyword>
<dbReference type="EMBL" id="AK021814">
    <property type="protein sequence ID" value="BAB13903.1"/>
    <property type="status" value="ALT_INIT"/>
    <property type="molecule type" value="mRNA"/>
</dbReference>
<dbReference type="EMBL" id="AL162399">
    <property type="status" value="NOT_ANNOTATED_CDS"/>
    <property type="molecule type" value="Genomic_DNA"/>
</dbReference>
<dbReference type="EMBL" id="BC047476">
    <property type="protein sequence ID" value="AAH47476.1"/>
    <property type="status" value="ALT_SEQ"/>
    <property type="molecule type" value="mRNA"/>
</dbReference>
<dbReference type="EMBL" id="BC064945">
    <property type="protein sequence ID" value="AAH64945.1"/>
    <property type="status" value="ALT_INIT"/>
    <property type="molecule type" value="mRNA"/>
</dbReference>
<dbReference type="EMBL" id="AF143889">
    <property type="protein sequence ID" value="AAD32702.1"/>
    <property type="status" value="ALT_SEQ"/>
    <property type="molecule type" value="mRNA"/>
</dbReference>
<dbReference type="CCDS" id="CCDS1289.2">
    <molecule id="Q5T7V8-1"/>
</dbReference>
<dbReference type="CCDS" id="CCDS53428.2">
    <molecule id="Q5T7V8-2"/>
</dbReference>
<dbReference type="RefSeq" id="NP_001139511.2">
    <molecule id="Q5T7V8-2"/>
    <property type="nucleotide sequence ID" value="NM_001146039.2"/>
</dbReference>
<dbReference type="RefSeq" id="NP_001307181.1">
    <property type="nucleotide sequence ID" value="NM_001320252.1"/>
</dbReference>
<dbReference type="RefSeq" id="NP_689494.3">
    <molecule id="Q5T7V8-1"/>
    <property type="nucleotide sequence ID" value="NM_152281.3"/>
</dbReference>
<dbReference type="SMR" id="Q5T7V8"/>
<dbReference type="BioGRID" id="124937">
    <property type="interactions" value="115"/>
</dbReference>
<dbReference type="FunCoup" id="Q5T7V8">
    <property type="interactions" value="3465"/>
</dbReference>
<dbReference type="IntAct" id="Q5T7V8">
    <property type="interactions" value="72"/>
</dbReference>
<dbReference type="MINT" id="Q5T7V8"/>
<dbReference type="STRING" id="9606.ENSP00000356737"/>
<dbReference type="iPTMnet" id="Q5T7V8"/>
<dbReference type="PhosphoSitePlus" id="Q5T7V8"/>
<dbReference type="BioMuta" id="GORAB"/>
<dbReference type="DMDM" id="74745442"/>
<dbReference type="jPOST" id="Q5T7V8"/>
<dbReference type="MassIVE" id="Q5T7V8"/>
<dbReference type="PaxDb" id="9606-ENSP00000356737"/>
<dbReference type="PeptideAtlas" id="Q5T7V8"/>
<dbReference type="ProteomicsDB" id="64687">
    <molecule id="Q5T7V8-1"/>
</dbReference>
<dbReference type="ProteomicsDB" id="64688">
    <molecule id="Q5T7V8-2"/>
</dbReference>
<dbReference type="Pumba" id="Q5T7V8"/>
<dbReference type="Antibodypedia" id="34371">
    <property type="antibodies" value="388 antibodies from 28 providers"/>
</dbReference>
<dbReference type="DNASU" id="92344"/>
<dbReference type="Ensembl" id="ENST00000367762.2">
    <molecule id="Q5T7V8-2"/>
    <property type="protein sequence ID" value="ENSP00000356736.2"/>
    <property type="gene ID" value="ENSG00000120370.14"/>
</dbReference>
<dbReference type="Ensembl" id="ENST00000367763.8">
    <molecule id="Q5T7V8-1"/>
    <property type="protein sequence ID" value="ENSP00000356737.4"/>
    <property type="gene ID" value="ENSG00000120370.14"/>
</dbReference>
<dbReference type="GeneID" id="92344"/>
<dbReference type="KEGG" id="hsa:92344"/>
<dbReference type="MANE-Select" id="ENST00000367763.8">
    <property type="protein sequence ID" value="ENSP00000356737.4"/>
    <property type="RefSeq nucleotide sequence ID" value="NM_152281.3"/>
    <property type="RefSeq protein sequence ID" value="NP_689494.3"/>
</dbReference>
<dbReference type="UCSC" id="uc001ggz.5">
    <molecule id="Q5T7V8-1"/>
    <property type="organism name" value="human"/>
</dbReference>
<dbReference type="AGR" id="HGNC:25676"/>
<dbReference type="CTD" id="92344"/>
<dbReference type="DisGeNET" id="92344"/>
<dbReference type="GeneCards" id="GORAB"/>
<dbReference type="HGNC" id="HGNC:25676">
    <property type="gene designation" value="GORAB"/>
</dbReference>
<dbReference type="HPA" id="ENSG00000120370">
    <property type="expression patterns" value="Low tissue specificity"/>
</dbReference>
<dbReference type="MalaCards" id="GORAB"/>
<dbReference type="MIM" id="231070">
    <property type="type" value="phenotype"/>
</dbReference>
<dbReference type="MIM" id="607983">
    <property type="type" value="gene"/>
</dbReference>
<dbReference type="neXtProt" id="NX_Q5T7V8"/>
<dbReference type="OpenTargets" id="ENSG00000120370"/>
<dbReference type="Orphanet" id="2078">
    <property type="disease" value="Geroderma osteodysplastica"/>
</dbReference>
<dbReference type="PharmGKB" id="PA164720285"/>
<dbReference type="VEuPathDB" id="HostDB:ENSG00000120370"/>
<dbReference type="eggNOG" id="ENOG502R60M">
    <property type="taxonomic scope" value="Eukaryota"/>
</dbReference>
<dbReference type="GeneTree" id="ENSGT00390000014886"/>
<dbReference type="HOGENOM" id="CLU_064636_0_0_1"/>
<dbReference type="InParanoid" id="Q5T7V8"/>
<dbReference type="OMA" id="PNCPNQE"/>
<dbReference type="OrthoDB" id="9909311at2759"/>
<dbReference type="PAN-GO" id="Q5T7V8">
    <property type="GO annotations" value="1 GO annotation based on evolutionary models"/>
</dbReference>
<dbReference type="PhylomeDB" id="Q5T7V8"/>
<dbReference type="TreeFam" id="TF324839"/>
<dbReference type="PathwayCommons" id="Q5T7V8"/>
<dbReference type="SignaLink" id="Q5T7V8"/>
<dbReference type="BioGRID-ORCS" id="92344">
    <property type="hits" value="11 hits in 1151 CRISPR screens"/>
</dbReference>
<dbReference type="ChiTaRS" id="GORAB">
    <property type="organism name" value="human"/>
</dbReference>
<dbReference type="GenomeRNAi" id="92344"/>
<dbReference type="Pharos" id="Q5T7V8">
    <property type="development level" value="Tbio"/>
</dbReference>
<dbReference type="PRO" id="PR:Q5T7V8"/>
<dbReference type="Proteomes" id="UP000005640">
    <property type="component" value="Chromosome 1"/>
</dbReference>
<dbReference type="RNAct" id="Q5T7V8">
    <property type="molecule type" value="protein"/>
</dbReference>
<dbReference type="Bgee" id="ENSG00000120370">
    <property type="expression patterns" value="Expressed in calcaneal tendon and 174 other cell types or tissues"/>
</dbReference>
<dbReference type="ExpressionAtlas" id="Q5T7V8">
    <property type="expression patterns" value="baseline and differential"/>
</dbReference>
<dbReference type="GO" id="GO:0005737">
    <property type="term" value="C:cytoplasm"/>
    <property type="evidence" value="ECO:0000250"/>
    <property type="project" value="HGNC"/>
</dbReference>
<dbReference type="GO" id="GO:0005829">
    <property type="term" value="C:cytosol"/>
    <property type="evidence" value="ECO:0000314"/>
    <property type="project" value="HPA"/>
</dbReference>
<dbReference type="GO" id="GO:0005794">
    <property type="term" value="C:Golgi apparatus"/>
    <property type="evidence" value="ECO:0000314"/>
    <property type="project" value="HPA"/>
</dbReference>
<dbReference type="GO" id="GO:0005730">
    <property type="term" value="C:nucleolus"/>
    <property type="evidence" value="ECO:0000314"/>
    <property type="project" value="HPA"/>
</dbReference>
<dbReference type="GO" id="GO:0005654">
    <property type="term" value="C:nucleoplasm"/>
    <property type="evidence" value="ECO:0000314"/>
    <property type="project" value="HPA"/>
</dbReference>
<dbReference type="GO" id="GO:0031069">
    <property type="term" value="P:hair follicle morphogenesis"/>
    <property type="evidence" value="ECO:0007669"/>
    <property type="project" value="Ensembl"/>
</dbReference>
<dbReference type="GO" id="GO:1905515">
    <property type="term" value="P:non-motile cilium assembly"/>
    <property type="evidence" value="ECO:0000318"/>
    <property type="project" value="GO_Central"/>
</dbReference>
<dbReference type="GO" id="GO:0045880">
    <property type="term" value="P:positive regulation of smoothened signaling pathway"/>
    <property type="evidence" value="ECO:0007669"/>
    <property type="project" value="Ensembl"/>
</dbReference>
<dbReference type="InterPro" id="IPR007033">
    <property type="entry name" value="GORAB"/>
</dbReference>
<dbReference type="PANTHER" id="PTHR21470:SF2">
    <property type="entry name" value="RAB6-INTERACTING GOLGIN"/>
    <property type="match status" value="1"/>
</dbReference>
<dbReference type="PANTHER" id="PTHR21470">
    <property type="entry name" value="RAB6-INTERACTING PROTEIN GORAB"/>
    <property type="match status" value="1"/>
</dbReference>
<dbReference type="Pfam" id="PF04949">
    <property type="entry name" value="Transcrip_act"/>
    <property type="match status" value="1"/>
</dbReference>
<feature type="chain" id="PRO_0000252444" description="RAB6-interacting golgin">
    <location>
        <begin position="1"/>
        <end position="369"/>
    </location>
</feature>
<feature type="region of interest" description="Disordered" evidence="3">
    <location>
        <begin position="1"/>
        <end position="128"/>
    </location>
</feature>
<feature type="region of interest" description="Necessary for interaction with RCHY1" evidence="5">
    <location>
        <begin position="188"/>
        <end position="369"/>
    </location>
</feature>
<feature type="region of interest" description="Disordered" evidence="3">
    <location>
        <begin position="334"/>
        <end position="369"/>
    </location>
</feature>
<feature type="coiled-coil region" evidence="2">
    <location>
        <begin position="145"/>
        <end position="297"/>
    </location>
</feature>
<feature type="compositionally biased region" description="Basic and acidic residues" evidence="3">
    <location>
        <begin position="11"/>
        <end position="27"/>
    </location>
</feature>
<feature type="compositionally biased region" description="Polar residues" evidence="3">
    <location>
        <begin position="46"/>
        <end position="61"/>
    </location>
</feature>
<feature type="compositionally biased region" description="Polar residues" evidence="3">
    <location>
        <begin position="82"/>
        <end position="93"/>
    </location>
</feature>
<feature type="compositionally biased region" description="Basic and acidic residues" evidence="3">
    <location>
        <begin position="106"/>
        <end position="120"/>
    </location>
</feature>
<feature type="compositionally biased region" description="Polar residues" evidence="3">
    <location>
        <begin position="342"/>
        <end position="361"/>
    </location>
</feature>
<feature type="splice variant" id="VSP_020978" description="In isoform 2." evidence="7">
    <location>
        <begin position="222"/>
        <end position="369"/>
    </location>
</feature>
<feature type="sequence variant" id="VAR_027867" description="In dbSNP:rs913257." evidence="4">
    <original>E</original>
    <variation>K</variation>
    <location>
        <position position="295"/>
    </location>
</feature>
<feature type="sequence conflict" description="In Ref. 1; BAB13903." evidence="8" ref="1">
    <original>I</original>
    <variation>T</variation>
    <location>
        <position position="203"/>
    </location>
</feature>
<feature type="sequence conflict" description="In Ref. 1; BAB13903." evidence="8" ref="1">
    <original>R</original>
    <variation>G</variation>
    <location>
        <position position="291"/>
    </location>
</feature>
<feature type="sequence conflict" description="In Ref. 4; AAD32702." evidence="8" ref="4">
    <original>N</original>
    <variation>D</variation>
    <location>
        <position position="354"/>
    </location>
</feature>
<reference key="1">
    <citation type="journal article" date="2004" name="Nat. Genet.">
        <title>Complete sequencing and characterization of 21,243 full-length human cDNAs.</title>
        <authorList>
            <person name="Ota T."/>
            <person name="Suzuki Y."/>
            <person name="Nishikawa T."/>
            <person name="Otsuki T."/>
            <person name="Sugiyama T."/>
            <person name="Irie R."/>
            <person name="Wakamatsu A."/>
            <person name="Hayashi K."/>
            <person name="Sato H."/>
            <person name="Nagai K."/>
            <person name="Kimura K."/>
            <person name="Makita H."/>
            <person name="Sekine M."/>
            <person name="Obayashi M."/>
            <person name="Nishi T."/>
            <person name="Shibahara T."/>
            <person name="Tanaka T."/>
            <person name="Ishii S."/>
            <person name="Yamamoto J."/>
            <person name="Saito K."/>
            <person name="Kawai Y."/>
            <person name="Isono Y."/>
            <person name="Nakamura Y."/>
            <person name="Nagahari K."/>
            <person name="Murakami K."/>
            <person name="Yasuda T."/>
            <person name="Iwayanagi T."/>
            <person name="Wagatsuma M."/>
            <person name="Shiratori A."/>
            <person name="Sudo H."/>
            <person name="Hosoiri T."/>
            <person name="Kaku Y."/>
            <person name="Kodaira H."/>
            <person name="Kondo H."/>
            <person name="Sugawara M."/>
            <person name="Takahashi M."/>
            <person name="Kanda K."/>
            <person name="Yokoi T."/>
            <person name="Furuya T."/>
            <person name="Kikkawa E."/>
            <person name="Omura Y."/>
            <person name="Abe K."/>
            <person name="Kamihara K."/>
            <person name="Katsuta N."/>
            <person name="Sato K."/>
            <person name="Tanikawa M."/>
            <person name="Yamazaki M."/>
            <person name="Ninomiya K."/>
            <person name="Ishibashi T."/>
            <person name="Yamashita H."/>
            <person name="Murakawa K."/>
            <person name="Fujimori K."/>
            <person name="Tanai H."/>
            <person name="Kimata M."/>
            <person name="Watanabe M."/>
            <person name="Hiraoka S."/>
            <person name="Chiba Y."/>
            <person name="Ishida S."/>
            <person name="Ono Y."/>
            <person name="Takiguchi S."/>
            <person name="Watanabe S."/>
            <person name="Yosida M."/>
            <person name="Hotuta T."/>
            <person name="Kusano J."/>
            <person name="Kanehori K."/>
            <person name="Takahashi-Fujii A."/>
            <person name="Hara H."/>
            <person name="Tanase T.-O."/>
            <person name="Nomura Y."/>
            <person name="Togiya S."/>
            <person name="Komai F."/>
            <person name="Hara R."/>
            <person name="Takeuchi K."/>
            <person name="Arita M."/>
            <person name="Imose N."/>
            <person name="Musashino K."/>
            <person name="Yuuki H."/>
            <person name="Oshima A."/>
            <person name="Sasaki N."/>
            <person name="Aotsuka S."/>
            <person name="Yoshikawa Y."/>
            <person name="Matsunawa H."/>
            <person name="Ichihara T."/>
            <person name="Shiohata N."/>
            <person name="Sano S."/>
            <person name="Moriya S."/>
            <person name="Momiyama H."/>
            <person name="Satoh N."/>
            <person name="Takami S."/>
            <person name="Terashima Y."/>
            <person name="Suzuki O."/>
            <person name="Nakagawa S."/>
            <person name="Senoh A."/>
            <person name="Mizoguchi H."/>
            <person name="Goto Y."/>
            <person name="Shimizu F."/>
            <person name="Wakebe H."/>
            <person name="Hishigaki H."/>
            <person name="Watanabe T."/>
            <person name="Sugiyama A."/>
            <person name="Takemoto M."/>
            <person name="Kawakami B."/>
            <person name="Yamazaki M."/>
            <person name="Watanabe K."/>
            <person name="Kumagai A."/>
            <person name="Itakura S."/>
            <person name="Fukuzumi Y."/>
            <person name="Fujimori Y."/>
            <person name="Komiyama M."/>
            <person name="Tashiro H."/>
            <person name="Tanigami A."/>
            <person name="Fujiwara T."/>
            <person name="Ono T."/>
            <person name="Yamada K."/>
            <person name="Fujii Y."/>
            <person name="Ozaki K."/>
            <person name="Hirao M."/>
            <person name="Ohmori Y."/>
            <person name="Kawabata A."/>
            <person name="Hikiji T."/>
            <person name="Kobatake N."/>
            <person name="Inagaki H."/>
            <person name="Ikema Y."/>
            <person name="Okamoto S."/>
            <person name="Okitani R."/>
            <person name="Kawakami T."/>
            <person name="Noguchi S."/>
            <person name="Itoh T."/>
            <person name="Shigeta K."/>
            <person name="Senba T."/>
            <person name="Matsumura K."/>
            <person name="Nakajima Y."/>
            <person name="Mizuno T."/>
            <person name="Morinaga M."/>
            <person name="Sasaki M."/>
            <person name="Togashi T."/>
            <person name="Oyama M."/>
            <person name="Hata H."/>
            <person name="Watanabe M."/>
            <person name="Komatsu T."/>
            <person name="Mizushima-Sugano J."/>
            <person name="Satoh T."/>
            <person name="Shirai Y."/>
            <person name="Takahashi Y."/>
            <person name="Nakagawa K."/>
            <person name="Okumura K."/>
            <person name="Nagase T."/>
            <person name="Nomura N."/>
            <person name="Kikuchi H."/>
            <person name="Masuho Y."/>
            <person name="Yamashita R."/>
            <person name="Nakai K."/>
            <person name="Yada T."/>
            <person name="Nakamura Y."/>
            <person name="Ohara O."/>
            <person name="Isogai T."/>
            <person name="Sugano S."/>
        </authorList>
    </citation>
    <scope>NUCLEOTIDE SEQUENCE [LARGE SCALE MRNA] (ISOFORM 1)</scope>
    <scope>VARIANT LYS-295</scope>
    <source>
        <tissue>Embryo</tissue>
    </source>
</reference>
<reference key="2">
    <citation type="journal article" date="2006" name="Nature">
        <title>The DNA sequence and biological annotation of human chromosome 1.</title>
        <authorList>
            <person name="Gregory S.G."/>
            <person name="Barlow K.F."/>
            <person name="McLay K.E."/>
            <person name="Kaul R."/>
            <person name="Swarbreck D."/>
            <person name="Dunham A."/>
            <person name="Scott C.E."/>
            <person name="Howe K.L."/>
            <person name="Woodfine K."/>
            <person name="Spencer C.C.A."/>
            <person name="Jones M.C."/>
            <person name="Gillson C."/>
            <person name="Searle S."/>
            <person name="Zhou Y."/>
            <person name="Kokocinski F."/>
            <person name="McDonald L."/>
            <person name="Evans R."/>
            <person name="Phillips K."/>
            <person name="Atkinson A."/>
            <person name="Cooper R."/>
            <person name="Jones C."/>
            <person name="Hall R.E."/>
            <person name="Andrews T.D."/>
            <person name="Lloyd C."/>
            <person name="Ainscough R."/>
            <person name="Almeida J.P."/>
            <person name="Ambrose K.D."/>
            <person name="Anderson F."/>
            <person name="Andrew R.W."/>
            <person name="Ashwell R.I.S."/>
            <person name="Aubin K."/>
            <person name="Babbage A.K."/>
            <person name="Bagguley C.L."/>
            <person name="Bailey J."/>
            <person name="Beasley H."/>
            <person name="Bethel G."/>
            <person name="Bird C.P."/>
            <person name="Bray-Allen S."/>
            <person name="Brown J.Y."/>
            <person name="Brown A.J."/>
            <person name="Buckley D."/>
            <person name="Burton J."/>
            <person name="Bye J."/>
            <person name="Carder C."/>
            <person name="Chapman J.C."/>
            <person name="Clark S.Y."/>
            <person name="Clarke G."/>
            <person name="Clee C."/>
            <person name="Cobley V."/>
            <person name="Collier R.E."/>
            <person name="Corby N."/>
            <person name="Coville G.J."/>
            <person name="Davies J."/>
            <person name="Deadman R."/>
            <person name="Dunn M."/>
            <person name="Earthrowl M."/>
            <person name="Ellington A.G."/>
            <person name="Errington H."/>
            <person name="Frankish A."/>
            <person name="Frankland J."/>
            <person name="French L."/>
            <person name="Garner P."/>
            <person name="Garnett J."/>
            <person name="Gay L."/>
            <person name="Ghori M.R.J."/>
            <person name="Gibson R."/>
            <person name="Gilby L.M."/>
            <person name="Gillett W."/>
            <person name="Glithero R.J."/>
            <person name="Grafham D.V."/>
            <person name="Griffiths C."/>
            <person name="Griffiths-Jones S."/>
            <person name="Grocock R."/>
            <person name="Hammond S."/>
            <person name="Harrison E.S.I."/>
            <person name="Hart E."/>
            <person name="Haugen E."/>
            <person name="Heath P.D."/>
            <person name="Holmes S."/>
            <person name="Holt K."/>
            <person name="Howden P.J."/>
            <person name="Hunt A.R."/>
            <person name="Hunt S.E."/>
            <person name="Hunter G."/>
            <person name="Isherwood J."/>
            <person name="James R."/>
            <person name="Johnson C."/>
            <person name="Johnson D."/>
            <person name="Joy A."/>
            <person name="Kay M."/>
            <person name="Kershaw J.K."/>
            <person name="Kibukawa M."/>
            <person name="Kimberley A.M."/>
            <person name="King A."/>
            <person name="Knights A.J."/>
            <person name="Lad H."/>
            <person name="Laird G."/>
            <person name="Lawlor S."/>
            <person name="Leongamornlert D.A."/>
            <person name="Lloyd D.M."/>
            <person name="Loveland J."/>
            <person name="Lovell J."/>
            <person name="Lush M.J."/>
            <person name="Lyne R."/>
            <person name="Martin S."/>
            <person name="Mashreghi-Mohammadi M."/>
            <person name="Matthews L."/>
            <person name="Matthews N.S.W."/>
            <person name="McLaren S."/>
            <person name="Milne S."/>
            <person name="Mistry S."/>
            <person name="Moore M.J.F."/>
            <person name="Nickerson T."/>
            <person name="O'Dell C.N."/>
            <person name="Oliver K."/>
            <person name="Palmeiri A."/>
            <person name="Palmer S.A."/>
            <person name="Parker A."/>
            <person name="Patel D."/>
            <person name="Pearce A.V."/>
            <person name="Peck A.I."/>
            <person name="Pelan S."/>
            <person name="Phelps K."/>
            <person name="Phillimore B.J."/>
            <person name="Plumb R."/>
            <person name="Rajan J."/>
            <person name="Raymond C."/>
            <person name="Rouse G."/>
            <person name="Saenphimmachak C."/>
            <person name="Sehra H.K."/>
            <person name="Sheridan E."/>
            <person name="Shownkeen R."/>
            <person name="Sims S."/>
            <person name="Skuce C.D."/>
            <person name="Smith M."/>
            <person name="Steward C."/>
            <person name="Subramanian S."/>
            <person name="Sycamore N."/>
            <person name="Tracey A."/>
            <person name="Tromans A."/>
            <person name="Van Helmond Z."/>
            <person name="Wall M."/>
            <person name="Wallis J.M."/>
            <person name="White S."/>
            <person name="Whitehead S.L."/>
            <person name="Wilkinson J.E."/>
            <person name="Willey D.L."/>
            <person name="Williams H."/>
            <person name="Wilming L."/>
            <person name="Wray P.W."/>
            <person name="Wu Z."/>
            <person name="Coulson A."/>
            <person name="Vaudin M."/>
            <person name="Sulston J.E."/>
            <person name="Durbin R.M."/>
            <person name="Hubbard T."/>
            <person name="Wooster R."/>
            <person name="Dunham I."/>
            <person name="Carter N.P."/>
            <person name="McVean G."/>
            <person name="Ross M.T."/>
            <person name="Harrow J."/>
            <person name="Olson M.V."/>
            <person name="Beck S."/>
            <person name="Rogers J."/>
            <person name="Bentley D.R."/>
        </authorList>
    </citation>
    <scope>NUCLEOTIDE SEQUENCE [LARGE SCALE GENOMIC DNA]</scope>
</reference>
<reference key="3">
    <citation type="journal article" date="2004" name="Genome Res.">
        <title>The status, quality, and expansion of the NIH full-length cDNA project: the Mammalian Gene Collection (MGC).</title>
        <authorList>
            <consortium name="The MGC Project Team"/>
        </authorList>
    </citation>
    <scope>NUCLEOTIDE SEQUENCE [LARGE SCALE MRNA] (ISOFORMS 1 AND 2)</scope>
    <source>
        <tissue>Pancreas</tissue>
        <tissue>Testis</tissue>
    </source>
</reference>
<reference key="4">
    <citation type="submission" date="1999-04" db="EMBL/GenBank/DDBJ databases">
        <authorList>
            <consortium name="The European IMAGE consortium"/>
        </authorList>
    </citation>
    <scope>NUCLEOTIDE SEQUENCE [LARGE SCALE MRNA] OF 174-369 (ISOFORM 1)</scope>
</reference>
<reference key="5">
    <citation type="journal article" date="2005" name="Biochem. Biophys. Res. Commun.">
        <title>A new human gene hNTKL-BP1 interacts with hPirh2.</title>
        <authorList>
            <person name="Zhang L."/>
            <person name="Li J."/>
            <person name="Wang C."/>
            <person name="Ma Y."/>
            <person name="Huo K."/>
        </authorList>
    </citation>
    <scope>INTERACTION WITH RCHY1</scope>
    <scope>SUBCELLULAR LOCATION</scope>
</reference>
<reference key="6">
    <citation type="journal article" date="2008" name="Nat. Genet.">
        <title>Gerodermia osteodysplastica is caused by mutations in SCYL1BP1, a Rab-6 interacting golgin.</title>
        <authorList>
            <person name="Hennies H.C."/>
            <person name="Kornak U."/>
            <person name="Zhang H."/>
            <person name="Egerer J."/>
            <person name="Zhang X."/>
            <person name="Seifert W."/>
            <person name="Kuhnisch J."/>
            <person name="Budde B."/>
            <person name="Naetebus M."/>
            <person name="Brancati F."/>
            <person name="Wilcox W.R."/>
            <person name="Mueller D."/>
            <person name="Kaplan P.B."/>
            <person name="Rajab A."/>
            <person name="Zampino G."/>
            <person name="Fodale V."/>
            <person name="Dallapiccola B."/>
            <person name="Newman W."/>
            <person name="Metcalfe K."/>
            <person name="Clayton-Smith J."/>
            <person name="Tassabehji M."/>
            <person name="Steinmann B."/>
            <person name="Barr F.A."/>
            <person name="Nuernberg P."/>
            <person name="Wieacker P."/>
            <person name="Mundlos S."/>
        </authorList>
    </citation>
    <scope>SUBCELLULAR LOCATION</scope>
    <scope>INTERACTION WITH RAB6A</scope>
    <scope>INVOLVEMENT IN GERODERMA OSTEODYSPLASTICUM</scope>
</reference>
<reference key="7">
    <citation type="journal article" date="2008" name="Proc. Natl. Acad. Sci. U.S.A.">
        <title>A quantitative atlas of mitotic phosphorylation.</title>
        <authorList>
            <person name="Dephoure N."/>
            <person name="Zhou C."/>
            <person name="Villen J."/>
            <person name="Beausoleil S.A."/>
            <person name="Bakalarski C.E."/>
            <person name="Elledge S.J."/>
            <person name="Gygi S.P."/>
        </authorList>
    </citation>
    <scope>IDENTIFICATION BY MASS SPECTROMETRY [LARGE SCALE ANALYSIS]</scope>
    <source>
        <tissue>Cervix carcinoma</tissue>
    </source>
</reference>
<protein>
    <recommendedName>
        <fullName>RAB6-interacting golgin</fullName>
    </recommendedName>
    <alternativeName>
        <fullName>N-terminal kinase-like-binding protein 1</fullName>
        <shortName>NTKL-BP1</shortName>
        <shortName>NTKL-binding protein 1</shortName>
        <shortName>hNTKL-BP1</shortName>
    </alternativeName>
    <alternativeName>
        <fullName>SCY1-like 1-binding protein 1</fullName>
        <shortName>SCYL1-BP1</shortName>
        <shortName>SCYL1-binding protein 1</shortName>
    </alternativeName>
</protein>
<proteinExistence type="evidence at protein level"/>
<evidence type="ECO:0000250" key="1"/>
<evidence type="ECO:0000255" key="2"/>
<evidence type="ECO:0000256" key="3">
    <source>
        <dbReference type="SAM" id="MobiDB-lite"/>
    </source>
</evidence>
<evidence type="ECO:0000269" key="4">
    <source>
    </source>
</evidence>
<evidence type="ECO:0000269" key="5">
    <source>
    </source>
</evidence>
<evidence type="ECO:0000269" key="6">
    <source>
    </source>
</evidence>
<evidence type="ECO:0000303" key="7">
    <source>
    </source>
</evidence>
<evidence type="ECO:0000305" key="8"/>
<gene>
    <name type="primary">GORAB</name>
    <name type="synonym">NTKLBP1</name>
    <name type="synonym">SCYL1BP1</name>
</gene>
<comment type="subunit">
    <text evidence="1 5 6">Interacts with SCYL1 (By similarity). Interacts with RCHY1 and RAB6A/RAB6.</text>
</comment>
<comment type="interaction">
    <interactant intactId="EBI-3917143">
        <id>Q5T7V8</id>
    </interactant>
    <interactant intactId="EBI-348517">
        <id>O95870</id>
        <label>ABHD16A</label>
    </interactant>
    <organismsDiffer>false</organismsDiffer>
    <experiments>3</experiments>
</comment>
<comment type="interaction">
    <interactant intactId="EBI-3917143">
        <id>Q5T7V8</id>
    </interactant>
    <interactant intactId="EBI-715495">
        <id>P05090</id>
        <label>APOD</label>
    </interactant>
    <organismsDiffer>false</organismsDiffer>
    <experiments>3</experiments>
</comment>
<comment type="interaction">
    <interactant intactId="EBI-3917143">
        <id>Q5T7V8</id>
    </interactant>
    <interactant intactId="EBI-78035">
        <id>Q07817</id>
        <label>BCL2L1</label>
    </interactant>
    <organismsDiffer>false</organismsDiffer>
    <experiments>3</experiments>
</comment>
<comment type="interaction">
    <interactant intactId="EBI-3917143">
        <id>Q5T7V8</id>
    </interactant>
    <interactant intactId="EBI-707714">
        <id>Q92843</id>
        <label>BCL2L2</label>
    </interactant>
    <organismsDiffer>false</organismsDiffer>
    <experiments>3</experiments>
</comment>
<comment type="interaction">
    <interactant intactId="EBI-3917143">
        <id>Q5T7V8</id>
    </interactant>
    <interactant intactId="EBI-752094">
        <id>Q12982</id>
        <label>BNIP2</label>
    </interactant>
    <organismsDiffer>false</organismsDiffer>
    <experiments>3</experiments>
</comment>
<comment type="interaction">
    <interactant intactId="EBI-3917143">
        <id>Q5T7V8</id>
    </interactant>
    <interactant intactId="EBI-712921">
        <id>P60033</id>
        <label>CD81</label>
    </interactant>
    <organismsDiffer>false</organismsDiffer>
    <experiments>3</experiments>
</comment>
<comment type="interaction">
    <interactant intactId="EBI-3917143">
        <id>Q5T7V8</id>
    </interactant>
    <interactant intactId="EBI-12360993">
        <id>P23141-3</id>
        <label>CES1</label>
    </interactant>
    <organismsDiffer>false</organismsDiffer>
    <experiments>3</experiments>
</comment>
<comment type="interaction">
    <interactant intactId="EBI-3917143">
        <id>Q5T7V8</id>
    </interactant>
    <interactant intactId="EBI-12256978">
        <id>Q8N6F1-2</id>
        <label>CLDN19</label>
    </interactant>
    <organismsDiffer>false</organismsDiffer>
    <experiments>3</experiments>
</comment>
<comment type="interaction">
    <interactant intactId="EBI-3917143">
        <id>Q5T7V8</id>
    </interactant>
    <interactant intactId="EBI-6165897">
        <id>Q9NWW5</id>
        <label>CLN6</label>
    </interactant>
    <organismsDiffer>false</organismsDiffer>
    <experiments>3</experiments>
</comment>
<comment type="interaction">
    <interactant intactId="EBI-3917143">
        <id>Q5T7V8</id>
    </interactant>
    <interactant intactId="EBI-2807956">
        <id>Q96FZ5</id>
        <label>CMTM7</label>
    </interactant>
    <organismsDiffer>false</organismsDiffer>
    <experiments>3</experiments>
</comment>
<comment type="interaction">
    <interactant intactId="EBI-3917143">
        <id>Q5T7V8</id>
    </interactant>
    <interactant intactId="EBI-12815321">
        <id>Q6PI25</id>
        <label>CNIH2</label>
    </interactant>
    <organismsDiffer>false</organismsDiffer>
    <experiments>3</experiments>
</comment>
<comment type="interaction">
    <interactant intactId="EBI-3917143">
        <id>Q5T7V8</id>
    </interactant>
    <interactant intactId="EBI-3911467">
        <id>Q07325</id>
        <label>CXCL9</label>
    </interactant>
    <organismsDiffer>false</organismsDiffer>
    <experiments>3</experiments>
</comment>
<comment type="interaction">
    <interactant intactId="EBI-3917143">
        <id>Q5T7V8</id>
    </interactant>
    <interactant intactId="EBI-489887">
        <id>P50402</id>
        <label>EMD</label>
    </interactant>
    <organismsDiffer>false</organismsDiffer>
    <experiments>3</experiments>
</comment>
<comment type="interaction">
    <interactant intactId="EBI-3917143">
        <id>Q5T7V8</id>
    </interactant>
    <interactant intactId="EBI-6166686">
        <id>Q96F15</id>
        <label>GIMAP5</label>
    </interactant>
    <organismsDiffer>false</organismsDiffer>
    <experiments>3</experiments>
</comment>
<comment type="interaction">
    <interactant intactId="EBI-3917143">
        <id>Q5T7V8</id>
    </interactant>
    <interactant intactId="EBI-2568251">
        <id>P11215</id>
        <label>ITGAM</label>
    </interactant>
    <organismsDiffer>false</organismsDiffer>
    <experiments>3</experiments>
</comment>
<comment type="interaction">
    <interactant intactId="EBI-3917143">
        <id>Q5T7V8</id>
    </interactant>
    <interactant intactId="EBI-12033434">
        <id>Q9UBY5</id>
        <label>LPAR3</label>
    </interactant>
    <organismsDiffer>false</organismsDiffer>
    <experiments>3</experiments>
</comment>
<comment type="interaction">
    <interactant intactId="EBI-3917143">
        <id>Q5T7V8</id>
    </interactant>
    <interactant intactId="EBI-2830349">
        <id>Q7Z4F1</id>
        <label>LRP10</label>
    </interactant>
    <organismsDiffer>false</organismsDiffer>
    <experiments>3</experiments>
</comment>
<comment type="interaction">
    <interactant intactId="EBI-3917143">
        <id>Q5T7V8</id>
    </interactant>
    <interactant intactId="EBI-389668">
        <id>Q00987</id>
        <label>MDM2</label>
    </interactant>
    <organismsDiffer>false</organismsDiffer>
    <experiments>6</experiments>
</comment>
<comment type="interaction">
    <interactant intactId="EBI-3917143">
        <id>Q5T7V8</id>
    </interactant>
    <interactant intactId="EBI-2808234">
        <id>P11836</id>
        <label>MS4A1</label>
    </interactant>
    <organismsDiffer>false</organismsDiffer>
    <experiments>3</experiments>
</comment>
<comment type="interaction">
    <interactant intactId="EBI-3917143">
        <id>Q5T7V8</id>
    </interactant>
    <interactant intactId="EBI-10262547">
        <id>Q8IXM6</id>
        <label>NRM</label>
    </interactant>
    <organismsDiffer>false</organismsDiffer>
    <experiments>3</experiments>
</comment>
<comment type="interaction">
    <interactant intactId="EBI-3917143">
        <id>Q5T7V8</id>
    </interactant>
    <interactant intactId="EBI-465167">
        <id>P09466</id>
        <label>PAEP</label>
    </interactant>
    <organismsDiffer>false</organismsDiffer>
    <experiments>3</experiments>
</comment>
<comment type="interaction">
    <interactant intactId="EBI-3917143">
        <id>Q5T7V8</id>
    </interactant>
    <interactant intactId="EBI-11721828">
        <id>Q8IY26</id>
        <label>PLPP6</label>
    </interactant>
    <organismsDiffer>false</organismsDiffer>
    <experiments>3</experiments>
</comment>
<comment type="interaction">
    <interactant intactId="EBI-3917143">
        <id>Q5T7V8</id>
    </interactant>
    <interactant intactId="EBI-14210385">
        <id>Q59EV6</id>
        <label>PPGB</label>
    </interactant>
    <organismsDiffer>false</organismsDiffer>
    <experiments>3</experiments>
</comment>
<comment type="interaction">
    <interactant intactId="EBI-3917143">
        <id>Q5T7V8</id>
    </interactant>
    <interactant intactId="EBI-742898">
        <id>P43378</id>
        <label>PTPN9</label>
    </interactant>
    <organismsDiffer>false</organismsDiffer>
    <experiments>3</experiments>
</comment>
<comment type="interaction">
    <interactant intactId="EBI-3917143">
        <id>Q5T7V8</id>
    </interactant>
    <interactant intactId="EBI-1058865">
        <id>O75396</id>
        <label>SEC22B</label>
    </interactant>
    <organismsDiffer>false</organismsDiffer>
    <experiments>3</experiments>
</comment>
<comment type="interaction">
    <interactant intactId="EBI-3917143">
        <id>Q5T7V8</id>
    </interactant>
    <interactant intactId="EBI-9679163">
        <id>Q9Y6D0</id>
        <label>SELENOK</label>
    </interactant>
    <organismsDiffer>false</organismsDiffer>
    <experiments>3</experiments>
</comment>
<comment type="interaction">
    <interactant intactId="EBI-3917143">
        <id>Q5T7V8</id>
    </interactant>
    <interactant intactId="EBI-12004298">
        <id>O75971-2</id>
        <label>SNAPC5</label>
    </interactant>
    <organismsDiffer>false</organismsDiffer>
    <experiments>3</experiments>
</comment>
<comment type="interaction">
    <interactant intactId="EBI-3917143">
        <id>Q5T7V8</id>
    </interactant>
    <interactant intactId="EBI-2691717">
        <id>Q86Y82</id>
        <label>STX12</label>
    </interactant>
    <organismsDiffer>false</organismsDiffer>
    <experiments>3</experiments>
</comment>
<comment type="interaction">
    <interactant intactId="EBI-3917143">
        <id>Q5T7V8</id>
    </interactant>
    <interactant intactId="EBI-727240">
        <id>Q9UNK0</id>
        <label>STX8</label>
    </interactant>
    <organismsDiffer>false</organismsDiffer>
    <experiments>3</experiments>
</comment>
<comment type="interaction">
    <interactant intactId="EBI-3917143">
        <id>Q5T7V8</id>
    </interactant>
    <interactant intactId="EBI-723946">
        <id>P17152</id>
        <label>TMEM11</label>
    </interactant>
    <organismsDiffer>false</organismsDiffer>
    <experiments>3</experiments>
</comment>
<comment type="interaction">
    <interactant intactId="EBI-3917143">
        <id>Q5T7V8</id>
    </interactant>
    <interactant intactId="EBI-10171534">
        <id>A0PK00</id>
        <label>TMEM120B</label>
    </interactant>
    <organismsDiffer>false</organismsDiffer>
    <experiments>3</experiments>
</comment>
<comment type="interaction">
    <interactant intactId="EBI-3917143">
        <id>Q5T7V8</id>
    </interactant>
    <interactant intactId="EBI-10694905">
        <id>Q5BJH2-2</id>
        <label>TMEM128</label>
    </interactant>
    <organismsDiffer>false</organismsDiffer>
    <experiments>3</experiments>
</comment>
<comment type="interaction">
    <interactant intactId="EBI-3917143">
        <id>Q5T7V8</id>
    </interactant>
    <interactant intactId="EBI-2339195">
        <id>Q9P0S9</id>
        <label>TMEM14C</label>
    </interactant>
    <organismsDiffer>false</organismsDiffer>
    <experiments>3</experiments>
</comment>
<comment type="interaction">
    <interactant intactId="EBI-3917143">
        <id>Q5T7V8</id>
    </interactant>
    <interactant intactId="EBI-13046724">
        <id>Q14656</id>
        <label>TMEM187</label>
    </interactant>
    <organismsDiffer>false</organismsDiffer>
    <experiments>3</experiments>
</comment>
<comment type="interaction">
    <interactant intactId="EBI-3917143">
        <id>Q5T7V8</id>
    </interactant>
    <interactant intactId="EBI-741829">
        <id>Q96HH6</id>
        <label>TMEM19</label>
    </interactant>
    <organismsDiffer>false</organismsDiffer>
    <experiments>3</experiments>
</comment>
<comment type="interaction">
    <interactant intactId="EBI-3917143">
        <id>Q5T7V8</id>
    </interactant>
    <interactant intactId="EBI-12195227">
        <id>Q8NBD8</id>
        <label>TMEM229B</label>
    </interactant>
    <organismsDiffer>false</organismsDiffer>
    <experiments>3</experiments>
</comment>
<comment type="interaction">
    <interactant intactId="EBI-3917143">
        <id>Q5T7V8</id>
    </interactant>
    <interactant intactId="EBI-2852148">
        <id>Q9H2L4</id>
        <label>TMEM60</label>
    </interactant>
    <organismsDiffer>false</organismsDiffer>
    <experiments>3</experiments>
</comment>
<comment type="interaction">
    <interactant intactId="EBI-3917143">
        <id>Q5T7V8</id>
    </interactant>
    <interactant intactId="EBI-12015604">
        <id>Q8N2M4</id>
        <label>TMEM86A</label>
    </interactant>
    <organismsDiffer>false</organismsDiffer>
    <experiments>3</experiments>
</comment>
<comment type="interaction">
    <interactant intactId="EBI-3917143">
        <id>Q5T7V8</id>
    </interactant>
    <interactant intactId="EBI-765817">
        <id>Q9Y228</id>
        <label>TRAF3IP3</label>
    </interactant>
    <organismsDiffer>false</organismsDiffer>
    <experiments>3</experiments>
</comment>
<comment type="interaction">
    <interactant intactId="EBI-3917143">
        <id>Q5T7V8</id>
    </interactant>
    <interactant intactId="EBI-12045841">
        <id>Q86UF1</id>
        <label>TSPAN33</label>
    </interactant>
    <organismsDiffer>false</organismsDiffer>
    <experiments>3</experiments>
</comment>
<comment type="interaction">
    <interactant intactId="EBI-3917143">
        <id>Q5T7V8</id>
    </interactant>
    <interactant intactId="EBI-10243654">
        <id>Q5BVD1</id>
        <label>TTMP</label>
    </interactant>
    <organismsDiffer>false</organismsDiffer>
    <experiments>3</experiments>
</comment>
<comment type="interaction">
    <interactant intactId="EBI-3917143">
        <id>Q5T7V8</id>
    </interactant>
    <interactant intactId="EBI-722343">
        <id>Q15836</id>
        <label>VAMP3</label>
    </interactant>
    <organismsDiffer>false</organismsDiffer>
    <experiments>3</experiments>
</comment>
<comment type="interaction">
    <interactant intactId="EBI-3917143">
        <id>Q5T7V8</id>
    </interactant>
    <interactant intactId="EBI-10191195">
        <id>O95183</id>
        <label>VAMP5</label>
    </interactant>
    <organismsDiffer>false</organismsDiffer>
    <experiments>3</experiments>
</comment>
<comment type="interaction">
    <interactant intactId="EBI-3917143">
        <id>Q5T7V8</id>
    </interactant>
    <interactant intactId="EBI-6256462">
        <id>Q9BQB6</id>
        <label>VKORC1</label>
    </interactant>
    <organismsDiffer>false</organismsDiffer>
    <experiments>3</experiments>
</comment>
<comment type="interaction">
    <interactant intactId="EBI-3917143">
        <id>Q5T7V8</id>
    </interactant>
    <interactant intactId="EBI-11337915">
        <id>Q8N0U8</id>
        <label>VKORC1L1</label>
    </interactant>
    <organismsDiffer>false</organismsDiffer>
    <experiments>3</experiments>
</comment>
<comment type="interaction">
    <interactant intactId="EBI-3917143">
        <id>Q5T7V8</id>
    </interactant>
    <interactant intactId="EBI-723529">
        <id>Q14508</id>
        <label>WFDC2</label>
    </interactant>
    <organismsDiffer>false</organismsDiffer>
    <experiments>3</experiments>
</comment>
<comment type="interaction">
    <interactant intactId="EBI-3917143">
        <id>Q5T7V8</id>
    </interactant>
    <interactant intactId="EBI-718439">
        <id>O95159</id>
        <label>ZFPL1</label>
    </interactant>
    <organismsDiffer>false</organismsDiffer>
    <experiments>3</experiments>
</comment>
<comment type="subcellular location">
    <subcellularLocation>
        <location evidence="5">Cytoplasm</location>
    </subcellularLocation>
    <subcellularLocation>
        <location evidence="6">Golgi apparatus</location>
    </subcellularLocation>
</comment>
<comment type="alternative products">
    <event type="alternative splicing"/>
    <isoform>
        <id>Q5T7V8-1</id>
        <name>1</name>
        <sequence type="displayed"/>
    </isoform>
    <isoform>
        <id>Q5T7V8-2</id>
        <name>2</name>
        <sequence type="described" ref="VSP_020978"/>
    </isoform>
</comment>
<comment type="disease" evidence="6">
    <disease id="DI-00509">
        <name>Geroderma osteodysplasticum</name>
        <acronym>GO</acronym>
        <description>A rare autosomal recessive disorder characterized by lax, wrinkled skin, joint laxity and a typical face with a prematurely aged appearance. Skeletal signs include severe osteoporosis leading to frequent fractures, malar and mandibular hypoplasia and a variable degree of growth retardation.</description>
        <dbReference type="MIM" id="231070"/>
    </disease>
    <text>The disease is caused by variants affecting the gene represented in this entry.</text>
</comment>
<comment type="similarity">
    <text evidence="8">Belongs to the GORAB family.</text>
</comment>
<comment type="sequence caution" evidence="8">
    <conflict type="miscellaneous discrepancy">
        <sequence resource="EMBL-CDS" id="AAD32702"/>
    </conflict>
    <text>Probable cloning artifact.</text>
</comment>
<comment type="sequence caution" evidence="8">
    <conflict type="miscellaneous discrepancy">
        <sequence resource="EMBL-CDS" id="AAH47476"/>
    </conflict>
    <text>Intron retention.</text>
</comment>
<comment type="sequence caution" evidence="8">
    <conflict type="erroneous initiation">
        <sequence resource="EMBL-CDS" id="AAH64945"/>
    </conflict>
    <text>Extended N-terminus.</text>
</comment>
<comment type="sequence caution" evidence="8">
    <conflict type="erroneous initiation">
        <sequence resource="EMBL-CDS" id="BAB13903"/>
    </conflict>
    <text>Extended N-terminus.</text>
</comment>
<organism>
    <name type="scientific">Homo sapiens</name>
    <name type="common">Human</name>
    <dbReference type="NCBI Taxonomy" id="9606"/>
    <lineage>
        <taxon>Eukaryota</taxon>
        <taxon>Metazoa</taxon>
        <taxon>Chordata</taxon>
        <taxon>Craniata</taxon>
        <taxon>Vertebrata</taxon>
        <taxon>Euteleostomi</taxon>
        <taxon>Mammalia</taxon>
        <taxon>Eutheria</taxon>
        <taxon>Euarchontoglires</taxon>
        <taxon>Primates</taxon>
        <taxon>Haplorrhini</taxon>
        <taxon>Catarrhini</taxon>
        <taxon>Hominidae</taxon>
        <taxon>Homo</taxon>
    </lineage>
</organism>